<keyword id="KW-0119">Carbohydrate metabolism</keyword>
<keyword id="KW-0146">Chitin degradation</keyword>
<keyword id="KW-0963">Cytoplasm</keyword>
<keyword id="KW-0378">Hydrolase</keyword>
<keyword id="KW-0460">Magnesium</keyword>
<keyword id="KW-0479">Metal-binding</keyword>
<keyword id="KW-0624">Polysaccharide degradation</keyword>
<dbReference type="EC" id="3.5.1.105" evidence="1"/>
<dbReference type="EMBL" id="CU928162">
    <property type="protein sequence ID" value="CAR08128.2"/>
    <property type="molecule type" value="Genomic_DNA"/>
</dbReference>
<dbReference type="RefSeq" id="WP_000440473.1">
    <property type="nucleotide sequence ID" value="NC_011745.1"/>
</dbReference>
<dbReference type="SMR" id="B7MVL2"/>
<dbReference type="KEGG" id="ecq:ECED1_1935"/>
<dbReference type="HOGENOM" id="CLU_064244_4_1_6"/>
<dbReference type="UniPathway" id="UPA00349"/>
<dbReference type="Proteomes" id="UP000000748">
    <property type="component" value="Chromosome"/>
</dbReference>
<dbReference type="GO" id="GO:0005737">
    <property type="term" value="C:cytoplasm"/>
    <property type="evidence" value="ECO:0007669"/>
    <property type="project" value="UniProtKB-SubCell"/>
</dbReference>
<dbReference type="GO" id="GO:0036311">
    <property type="term" value="F:chitin disaccharide deacetylase activity"/>
    <property type="evidence" value="ECO:0007669"/>
    <property type="project" value="UniProtKB-UniRule"/>
</dbReference>
<dbReference type="GO" id="GO:0019213">
    <property type="term" value="F:deacetylase activity"/>
    <property type="evidence" value="ECO:0007669"/>
    <property type="project" value="TreeGrafter"/>
</dbReference>
<dbReference type="GO" id="GO:0046872">
    <property type="term" value="F:metal ion binding"/>
    <property type="evidence" value="ECO:0007669"/>
    <property type="project" value="UniProtKB-KW"/>
</dbReference>
<dbReference type="GO" id="GO:0006032">
    <property type="term" value="P:chitin catabolic process"/>
    <property type="evidence" value="ECO:0007669"/>
    <property type="project" value="UniProtKB-UniPathway"/>
</dbReference>
<dbReference type="GO" id="GO:0052777">
    <property type="term" value="P:diacetylchitobiose catabolic process"/>
    <property type="evidence" value="ECO:0007669"/>
    <property type="project" value="UniProtKB-UniRule"/>
</dbReference>
<dbReference type="GO" id="GO:0000272">
    <property type="term" value="P:polysaccharide catabolic process"/>
    <property type="evidence" value="ECO:0007669"/>
    <property type="project" value="UniProtKB-UniRule"/>
</dbReference>
<dbReference type="CDD" id="cd10803">
    <property type="entry name" value="YdjC_EF3048_like"/>
    <property type="match status" value="1"/>
</dbReference>
<dbReference type="FunFam" id="3.20.20.370:FF:000001">
    <property type="entry name" value="Chitooligosaccharide deacetylase"/>
    <property type="match status" value="1"/>
</dbReference>
<dbReference type="Gene3D" id="3.20.20.370">
    <property type="entry name" value="Glycoside hydrolase/deacetylase"/>
    <property type="match status" value="1"/>
</dbReference>
<dbReference type="HAMAP" id="MF_01246">
    <property type="entry name" value="COD"/>
    <property type="match status" value="1"/>
</dbReference>
<dbReference type="InterPro" id="IPR022948">
    <property type="entry name" value="COD_ChbG_bac"/>
</dbReference>
<dbReference type="InterPro" id="IPR011330">
    <property type="entry name" value="Glyco_hydro/deAcase_b/a-brl"/>
</dbReference>
<dbReference type="InterPro" id="IPR006879">
    <property type="entry name" value="YdjC-like"/>
</dbReference>
<dbReference type="NCBIfam" id="NF002559">
    <property type="entry name" value="PRK02134.1"/>
    <property type="match status" value="1"/>
</dbReference>
<dbReference type="PANTHER" id="PTHR31609:SF1">
    <property type="entry name" value="CARBOHYDRATE DEACETYLASE"/>
    <property type="match status" value="1"/>
</dbReference>
<dbReference type="PANTHER" id="PTHR31609">
    <property type="entry name" value="YDJC DEACETYLASE FAMILY MEMBER"/>
    <property type="match status" value="1"/>
</dbReference>
<dbReference type="Pfam" id="PF04794">
    <property type="entry name" value="YdjC"/>
    <property type="match status" value="1"/>
</dbReference>
<dbReference type="SUPFAM" id="SSF88713">
    <property type="entry name" value="Glycoside hydrolase/deacetylase"/>
    <property type="match status" value="1"/>
</dbReference>
<organism>
    <name type="scientific">Escherichia coli O81 (strain ED1a)</name>
    <dbReference type="NCBI Taxonomy" id="585397"/>
    <lineage>
        <taxon>Bacteria</taxon>
        <taxon>Pseudomonadati</taxon>
        <taxon>Pseudomonadota</taxon>
        <taxon>Gammaproteobacteria</taxon>
        <taxon>Enterobacterales</taxon>
        <taxon>Enterobacteriaceae</taxon>
        <taxon>Escherichia</taxon>
    </lineage>
</organism>
<evidence type="ECO:0000255" key="1">
    <source>
        <dbReference type="HAMAP-Rule" id="MF_01246"/>
    </source>
</evidence>
<reference key="1">
    <citation type="journal article" date="2009" name="PLoS Genet.">
        <title>Organised genome dynamics in the Escherichia coli species results in highly diverse adaptive paths.</title>
        <authorList>
            <person name="Touchon M."/>
            <person name="Hoede C."/>
            <person name="Tenaillon O."/>
            <person name="Barbe V."/>
            <person name="Baeriswyl S."/>
            <person name="Bidet P."/>
            <person name="Bingen E."/>
            <person name="Bonacorsi S."/>
            <person name="Bouchier C."/>
            <person name="Bouvet O."/>
            <person name="Calteau A."/>
            <person name="Chiapello H."/>
            <person name="Clermont O."/>
            <person name="Cruveiller S."/>
            <person name="Danchin A."/>
            <person name="Diard M."/>
            <person name="Dossat C."/>
            <person name="Karoui M.E."/>
            <person name="Frapy E."/>
            <person name="Garry L."/>
            <person name="Ghigo J.M."/>
            <person name="Gilles A.M."/>
            <person name="Johnson J."/>
            <person name="Le Bouguenec C."/>
            <person name="Lescat M."/>
            <person name="Mangenot S."/>
            <person name="Martinez-Jehanne V."/>
            <person name="Matic I."/>
            <person name="Nassif X."/>
            <person name="Oztas S."/>
            <person name="Petit M.A."/>
            <person name="Pichon C."/>
            <person name="Rouy Z."/>
            <person name="Ruf C.S."/>
            <person name="Schneider D."/>
            <person name="Tourret J."/>
            <person name="Vacherie B."/>
            <person name="Vallenet D."/>
            <person name="Medigue C."/>
            <person name="Rocha E.P.C."/>
            <person name="Denamur E."/>
        </authorList>
    </citation>
    <scope>NUCLEOTIDE SEQUENCE [LARGE SCALE GENOMIC DNA]</scope>
    <source>
        <strain>ED1a</strain>
    </source>
</reference>
<feature type="chain" id="PRO_1000165047" description="Chitooligosaccharide deacetylase">
    <location>
        <begin position="1"/>
        <end position="252"/>
    </location>
</feature>
<feature type="binding site" evidence="1">
    <location>
        <position position="61"/>
    </location>
    <ligand>
        <name>Mg(2+)</name>
        <dbReference type="ChEBI" id="CHEBI:18420"/>
    </ligand>
</feature>
<feature type="binding site" evidence="1">
    <location>
        <position position="125"/>
    </location>
    <ligand>
        <name>Mg(2+)</name>
        <dbReference type="ChEBI" id="CHEBI:18420"/>
    </ligand>
</feature>
<name>CHBG_ECO81</name>
<protein>
    <recommendedName>
        <fullName evidence="1">Chitooligosaccharide deacetylase</fullName>
        <shortName evidence="1">COD</shortName>
        <ecNumber evidence="1">3.5.1.105</ecNumber>
    </recommendedName>
    <alternativeName>
        <fullName evidence="1">Chitin disaccharide deacetylase</fullName>
    </alternativeName>
    <alternativeName>
        <fullName evidence="1">Chitobiose deacetylase</fullName>
    </alternativeName>
    <alternativeName>
        <fullName evidence="1">Chitobiose-6P deacetylase</fullName>
    </alternativeName>
    <alternativeName>
        <fullName evidence="1">Chitotriose deacetylase</fullName>
    </alternativeName>
    <alternativeName>
        <fullName evidence="1">Chitotriose-6P deacetylase</fullName>
    </alternativeName>
</protein>
<gene>
    <name evidence="1" type="primary">chbG</name>
    <name type="ordered locus">ECED1_1935</name>
</gene>
<sequence>MERLLIVNADDFGLSKGQNYGIIEACRNGIVTSTTALVNGQAIDHAVQLSRDEPSLAIGMHFVLTMGKPLTAMPGLTRDGVLGKWIWQLAEEGALPLEEITQELASQYLRFIELFGRKPTHLDSHHHVHMFPQIFPIVAKFAAEEGIALRIDRQPLSNDGDLPANLRSSQGFSSAFYGEEISETLFLQVLDDSSHRGERSLEVMCHPAFVDNTIRQSAYCFPRLTELDVLTSASLKYAIAERGYLLGSYHDV</sequence>
<comment type="function">
    <text evidence="1">Involved in the degradation of chitin. ChbG is essential for growth on the acetylated chitooligosaccharides chitobiose and chitotriose but is dispensable for growth on cellobiose and chitosan dimer, the deacetylated form of chitobiose. Deacetylation of chitobiose-6-P and chitotriose-6-P is necessary for both the activation of the chb promoter by the regulatory protein ChbR and the hydrolysis of phosphorylated beta-glucosides by the phospho-beta-glucosidase ChbF. Catalyzes the removal of only one acetyl group from chitobiose-6-P to yield monoacetylchitobiose-6-P, the inducer of ChbR and the substrate of ChbF.</text>
</comment>
<comment type="catalytic activity">
    <reaction evidence="1">
        <text>N,N'-diacetylchitobiose + H2O = N-acetyl-beta-D-glucosaminyl-(1-&gt;4)-D-glucosamine + acetate</text>
        <dbReference type="Rhea" id="RHEA:27469"/>
        <dbReference type="ChEBI" id="CHEBI:15377"/>
        <dbReference type="ChEBI" id="CHEBI:28681"/>
        <dbReference type="ChEBI" id="CHEBI:30089"/>
        <dbReference type="ChEBI" id="CHEBI:59910"/>
        <dbReference type="EC" id="3.5.1.105"/>
    </reaction>
</comment>
<comment type="catalytic activity">
    <reaction evidence="1">
        <text>diacetylchitobiose-6'-phosphate + H2O = N'-monoacetylchitobiose-6'-phosphate + acetate</text>
        <dbReference type="Rhea" id="RHEA:35083"/>
        <dbReference type="ChEBI" id="CHEBI:15377"/>
        <dbReference type="ChEBI" id="CHEBI:30089"/>
        <dbReference type="ChEBI" id="CHEBI:64883"/>
        <dbReference type="ChEBI" id="CHEBI:71315"/>
    </reaction>
</comment>
<comment type="cofactor">
    <cofactor evidence="1">
        <name>Mg(2+)</name>
        <dbReference type="ChEBI" id="CHEBI:18420"/>
    </cofactor>
</comment>
<comment type="pathway">
    <text evidence="1">Glycan degradation; chitin degradation.</text>
</comment>
<comment type="subunit">
    <text evidence="1">Homodimer.</text>
</comment>
<comment type="subcellular location">
    <subcellularLocation>
        <location evidence="1">Cytoplasm</location>
    </subcellularLocation>
</comment>
<comment type="similarity">
    <text evidence="1">Belongs to the YdjC deacetylase family. ChbG subfamily.</text>
</comment>
<accession>B7MVL2</accession>
<proteinExistence type="inferred from homology"/>